<organism>
    <name type="scientific">Psychrobacter cryohalolentis (strain ATCC BAA-1226 / DSM 17306 / VKM B-2378 / K5)</name>
    <dbReference type="NCBI Taxonomy" id="335284"/>
    <lineage>
        <taxon>Bacteria</taxon>
        <taxon>Pseudomonadati</taxon>
        <taxon>Pseudomonadota</taxon>
        <taxon>Gammaproteobacteria</taxon>
        <taxon>Moraxellales</taxon>
        <taxon>Moraxellaceae</taxon>
        <taxon>Psychrobacter</taxon>
    </lineage>
</organism>
<proteinExistence type="inferred from homology"/>
<accession>Q1QCL5</accession>
<sequence>MSNIPAELKYIASHEWLRLEDDGTITVGITDHAQDLLGDVVFVELPDVGDIIAVDDEISVVESVKAASDVYAPISGEVVAINEALEDDPEIINSDPYGEGWFFRMKPDNIADYEALLTADEYENEL</sequence>
<comment type="function">
    <text evidence="1">The glycine cleavage system catalyzes the degradation of glycine. The H protein shuttles the methylamine group of glycine from the P protein to the T protein.</text>
</comment>
<comment type="cofactor">
    <cofactor evidence="1">
        <name>(R)-lipoate</name>
        <dbReference type="ChEBI" id="CHEBI:83088"/>
    </cofactor>
    <text evidence="1">Binds 1 lipoyl cofactor covalently.</text>
</comment>
<comment type="subunit">
    <text evidence="1">The glycine cleavage system is composed of four proteins: P, T, L and H.</text>
</comment>
<comment type="similarity">
    <text evidence="1">Belongs to the GcvH family.</text>
</comment>
<feature type="chain" id="PRO_0000302422" description="Glycine cleavage system H protein">
    <location>
        <begin position="1"/>
        <end position="126"/>
    </location>
</feature>
<feature type="domain" description="Lipoyl-binding" evidence="2">
    <location>
        <begin position="24"/>
        <end position="106"/>
    </location>
</feature>
<feature type="modified residue" description="N6-lipoyllysine" evidence="1">
    <location>
        <position position="65"/>
    </location>
</feature>
<reference key="1">
    <citation type="submission" date="2006-03" db="EMBL/GenBank/DDBJ databases">
        <title>Complete sequence of chromosome of Psychrobacter cryohalolentis K5.</title>
        <authorList>
            <consortium name="US DOE Joint Genome Institute"/>
            <person name="Copeland A."/>
            <person name="Lucas S."/>
            <person name="Lapidus A."/>
            <person name="Barry K."/>
            <person name="Detter J.C."/>
            <person name="Glavina T."/>
            <person name="Hammon N."/>
            <person name="Israni S."/>
            <person name="Dalin E."/>
            <person name="Tice H."/>
            <person name="Pitluck S."/>
            <person name="Brettin T."/>
            <person name="Bruce D."/>
            <person name="Han C."/>
            <person name="Tapia R."/>
            <person name="Sims D.R."/>
            <person name="Gilna P."/>
            <person name="Schmutz J."/>
            <person name="Larimer F."/>
            <person name="Land M."/>
            <person name="Hauser L."/>
            <person name="Kyrpides N."/>
            <person name="Kim E."/>
            <person name="Richardson P."/>
        </authorList>
    </citation>
    <scope>NUCLEOTIDE SEQUENCE [LARGE SCALE GENOMIC DNA]</scope>
    <source>
        <strain>ATCC BAA-1226 / DSM 17306 / VKM B-2378 / K5</strain>
    </source>
</reference>
<evidence type="ECO:0000255" key="1">
    <source>
        <dbReference type="HAMAP-Rule" id="MF_00272"/>
    </source>
</evidence>
<evidence type="ECO:0000255" key="2">
    <source>
        <dbReference type="PROSITE-ProRule" id="PRU01066"/>
    </source>
</evidence>
<dbReference type="EMBL" id="CP000323">
    <property type="protein sequence ID" value="ABE74588.1"/>
    <property type="molecule type" value="Genomic_DNA"/>
</dbReference>
<dbReference type="RefSeq" id="WP_011280078.1">
    <property type="nucleotide sequence ID" value="NC_007969.1"/>
</dbReference>
<dbReference type="SMR" id="Q1QCL5"/>
<dbReference type="STRING" id="335284.Pcryo_0805"/>
<dbReference type="GeneID" id="60255045"/>
<dbReference type="KEGG" id="pcr:Pcryo_0805"/>
<dbReference type="eggNOG" id="COG0509">
    <property type="taxonomic scope" value="Bacteria"/>
</dbReference>
<dbReference type="HOGENOM" id="CLU_097408_2_1_6"/>
<dbReference type="Proteomes" id="UP000002425">
    <property type="component" value="Chromosome"/>
</dbReference>
<dbReference type="GO" id="GO:0005829">
    <property type="term" value="C:cytosol"/>
    <property type="evidence" value="ECO:0007669"/>
    <property type="project" value="TreeGrafter"/>
</dbReference>
<dbReference type="GO" id="GO:0005960">
    <property type="term" value="C:glycine cleavage complex"/>
    <property type="evidence" value="ECO:0007669"/>
    <property type="project" value="InterPro"/>
</dbReference>
<dbReference type="GO" id="GO:0019464">
    <property type="term" value="P:glycine decarboxylation via glycine cleavage system"/>
    <property type="evidence" value="ECO:0007669"/>
    <property type="project" value="UniProtKB-UniRule"/>
</dbReference>
<dbReference type="CDD" id="cd06848">
    <property type="entry name" value="GCS_H"/>
    <property type="match status" value="1"/>
</dbReference>
<dbReference type="Gene3D" id="2.40.50.100">
    <property type="match status" value="1"/>
</dbReference>
<dbReference type="HAMAP" id="MF_00272">
    <property type="entry name" value="GcvH"/>
    <property type="match status" value="1"/>
</dbReference>
<dbReference type="InterPro" id="IPR003016">
    <property type="entry name" value="2-oxoA_DH_lipoyl-BS"/>
</dbReference>
<dbReference type="InterPro" id="IPR000089">
    <property type="entry name" value="Biotin_lipoyl"/>
</dbReference>
<dbReference type="InterPro" id="IPR002930">
    <property type="entry name" value="GCV_H"/>
</dbReference>
<dbReference type="InterPro" id="IPR033753">
    <property type="entry name" value="GCV_H/Fam206"/>
</dbReference>
<dbReference type="InterPro" id="IPR017453">
    <property type="entry name" value="GCV_H_sub"/>
</dbReference>
<dbReference type="InterPro" id="IPR011053">
    <property type="entry name" value="Single_hybrid_motif"/>
</dbReference>
<dbReference type="NCBIfam" id="TIGR00527">
    <property type="entry name" value="gcvH"/>
    <property type="match status" value="1"/>
</dbReference>
<dbReference type="NCBIfam" id="NF002270">
    <property type="entry name" value="PRK01202.1"/>
    <property type="match status" value="1"/>
</dbReference>
<dbReference type="PANTHER" id="PTHR11715">
    <property type="entry name" value="GLYCINE CLEAVAGE SYSTEM H PROTEIN"/>
    <property type="match status" value="1"/>
</dbReference>
<dbReference type="PANTHER" id="PTHR11715:SF3">
    <property type="entry name" value="GLYCINE CLEAVAGE SYSTEM H PROTEIN-RELATED"/>
    <property type="match status" value="1"/>
</dbReference>
<dbReference type="Pfam" id="PF01597">
    <property type="entry name" value="GCV_H"/>
    <property type="match status" value="1"/>
</dbReference>
<dbReference type="SUPFAM" id="SSF51230">
    <property type="entry name" value="Single hybrid motif"/>
    <property type="match status" value="1"/>
</dbReference>
<dbReference type="PROSITE" id="PS50968">
    <property type="entry name" value="BIOTINYL_LIPOYL"/>
    <property type="match status" value="1"/>
</dbReference>
<dbReference type="PROSITE" id="PS00189">
    <property type="entry name" value="LIPOYL"/>
    <property type="match status" value="1"/>
</dbReference>
<protein>
    <recommendedName>
        <fullName evidence="1">Glycine cleavage system H protein</fullName>
    </recommendedName>
</protein>
<name>GCSH_PSYCK</name>
<keyword id="KW-0450">Lipoyl</keyword>
<gene>
    <name evidence="1" type="primary">gcvH</name>
    <name type="ordered locus">Pcryo_0805</name>
</gene>